<comment type="function">
    <text evidence="1">IGPS catalyzes the conversion of PRFAR and glutamine to IGP, AICAR and glutamate. The HisH subunit catalyzes the hydrolysis of glutamine to glutamate and ammonia as part of the synthesis of IGP and AICAR. The resulting ammonia molecule is channeled to the active site of HisF (By similarity).</text>
</comment>
<comment type="catalytic activity">
    <reaction>
        <text>5-[(5-phospho-1-deoxy-D-ribulos-1-ylimino)methylamino]-1-(5-phospho-beta-D-ribosyl)imidazole-4-carboxamide + L-glutamine = D-erythro-1-(imidazol-4-yl)glycerol 3-phosphate + 5-amino-1-(5-phospho-beta-D-ribosyl)imidazole-4-carboxamide + L-glutamate + H(+)</text>
        <dbReference type="Rhea" id="RHEA:24793"/>
        <dbReference type="ChEBI" id="CHEBI:15378"/>
        <dbReference type="ChEBI" id="CHEBI:29985"/>
        <dbReference type="ChEBI" id="CHEBI:58278"/>
        <dbReference type="ChEBI" id="CHEBI:58359"/>
        <dbReference type="ChEBI" id="CHEBI:58475"/>
        <dbReference type="ChEBI" id="CHEBI:58525"/>
        <dbReference type="EC" id="4.3.2.10"/>
    </reaction>
</comment>
<comment type="catalytic activity">
    <reaction>
        <text>L-glutamine + H2O = L-glutamate + NH4(+)</text>
        <dbReference type="Rhea" id="RHEA:15889"/>
        <dbReference type="ChEBI" id="CHEBI:15377"/>
        <dbReference type="ChEBI" id="CHEBI:28938"/>
        <dbReference type="ChEBI" id="CHEBI:29985"/>
        <dbReference type="ChEBI" id="CHEBI:58359"/>
        <dbReference type="EC" id="3.5.1.2"/>
    </reaction>
</comment>
<comment type="pathway">
    <text>Amino-acid biosynthesis; L-histidine biosynthesis; L-histidine from 5-phospho-alpha-D-ribose 1-diphosphate: step 5/9.</text>
</comment>
<comment type="subunit">
    <text evidence="1">Heterodimer of HisH and HisF.</text>
</comment>
<comment type="subcellular location">
    <subcellularLocation>
        <location evidence="1">Cytoplasm</location>
    </subcellularLocation>
</comment>
<proteinExistence type="inferred from homology"/>
<reference key="1">
    <citation type="journal article" date="1999" name="Science">
        <title>Genome sequence of the radioresistant bacterium Deinococcus radiodurans R1.</title>
        <authorList>
            <person name="White O."/>
            <person name="Eisen J.A."/>
            <person name="Heidelberg J.F."/>
            <person name="Hickey E.K."/>
            <person name="Peterson J.D."/>
            <person name="Dodson R.J."/>
            <person name="Haft D.H."/>
            <person name="Gwinn M.L."/>
            <person name="Nelson W.C."/>
            <person name="Richardson D.L."/>
            <person name="Moffat K.S."/>
            <person name="Qin H."/>
            <person name="Jiang L."/>
            <person name="Pamphile W."/>
            <person name="Crosby M."/>
            <person name="Shen M."/>
            <person name="Vamathevan J.J."/>
            <person name="Lam P."/>
            <person name="McDonald L.A."/>
            <person name="Utterback T.R."/>
            <person name="Zalewski C."/>
            <person name="Makarova K.S."/>
            <person name="Aravind L."/>
            <person name="Daly M.J."/>
            <person name="Minton K.W."/>
            <person name="Fleischmann R.D."/>
            <person name="Ketchum K.A."/>
            <person name="Nelson K.E."/>
            <person name="Salzberg S.L."/>
            <person name="Smith H.O."/>
            <person name="Venter J.C."/>
            <person name="Fraser C.M."/>
        </authorList>
    </citation>
    <scope>NUCLEOTIDE SEQUENCE [LARGE SCALE GENOMIC DNA]</scope>
    <source>
        <strain>ATCC 13939 / DSM 20539 / JCM 16871 / CCUG 27074 / LMG 4051 / NBRC 15346 / NCIMB 9279 / VKM B-1422 / R1</strain>
    </source>
</reference>
<organism>
    <name type="scientific">Deinococcus radiodurans (strain ATCC 13939 / DSM 20539 / JCM 16871 / CCUG 27074 / LMG 4051 / NBRC 15346 / NCIMB 9279 / VKM B-1422 / R1)</name>
    <dbReference type="NCBI Taxonomy" id="243230"/>
    <lineage>
        <taxon>Bacteria</taxon>
        <taxon>Thermotogati</taxon>
        <taxon>Deinococcota</taxon>
        <taxon>Deinococci</taxon>
        <taxon>Deinococcales</taxon>
        <taxon>Deinococcaceae</taxon>
        <taxon>Deinococcus</taxon>
    </lineage>
</organism>
<keyword id="KW-0028">Amino-acid biosynthesis</keyword>
<keyword id="KW-0963">Cytoplasm</keyword>
<keyword id="KW-0315">Glutamine amidotransferase</keyword>
<keyword id="KW-0368">Histidine biosynthesis</keyword>
<keyword id="KW-0378">Hydrolase</keyword>
<keyword id="KW-0456">Lyase</keyword>
<keyword id="KW-1185">Reference proteome</keyword>
<gene>
    <name type="primary">hisH</name>
    <name type="ordered locus">DR_0426</name>
</gene>
<evidence type="ECO:0000250" key="1"/>
<feature type="chain" id="PRO_0000152371" description="Imidazole glycerol phosphate synthase subunit HisH">
    <location>
        <begin position="1"/>
        <end position="215"/>
    </location>
</feature>
<feature type="domain" description="Glutamine amidotransferase type-1">
    <location>
        <begin position="11"/>
        <end position="215"/>
    </location>
</feature>
<feature type="active site" description="Nucleophile" evidence="1">
    <location>
        <position position="89"/>
    </location>
</feature>
<feature type="active site" evidence="1">
    <location>
        <position position="193"/>
    </location>
</feature>
<feature type="active site" evidence="1">
    <location>
        <position position="195"/>
    </location>
</feature>
<protein>
    <recommendedName>
        <fullName>Imidazole glycerol phosphate synthase subunit HisH</fullName>
        <ecNumber>4.3.2.10</ecNumber>
    </recommendedName>
    <alternativeName>
        <fullName>IGP synthase glutaminase subunit</fullName>
        <ecNumber>3.5.1.2</ecNumber>
    </alternativeName>
    <alternativeName>
        <fullName>IGP synthase subunit HisH</fullName>
    </alternativeName>
    <alternativeName>
        <fullName>ImGP synthase subunit HisH</fullName>
        <shortName>IGPS subunit HisH</shortName>
    </alternativeName>
</protein>
<accession>Q9RX89</accession>
<sequence length="215" mass="22611">MSTTPVRAAPEVLLLDYGAGNVRSAARALERAGMTVRVTDNAADVPHAPALVVPGQGHFRQVMEAFEHGGFHGPVLDAARAGVPLLGICVGMQLLFDGSEEAPGVPGLGLIAGQVRKFAPAPERKVPQMGWNALEARGDSPLLRGLGPDAYAYFVHSYYVPVDVPVTDGAVTDYGVPFWSALSRGNLHAAQFHPEKSGAVGLALLANFRRELAPA</sequence>
<name>HIS5_DEIRA</name>
<dbReference type="EC" id="4.3.2.10"/>
<dbReference type="EC" id="3.5.1.2"/>
<dbReference type="EMBL" id="AE000513">
    <property type="protein sequence ID" value="AAF10003.1"/>
    <property type="molecule type" value="Genomic_DNA"/>
</dbReference>
<dbReference type="PIR" id="H75520">
    <property type="entry name" value="H75520"/>
</dbReference>
<dbReference type="RefSeq" id="NP_294149.1">
    <property type="nucleotide sequence ID" value="NC_001263.1"/>
</dbReference>
<dbReference type="RefSeq" id="WP_010887071.1">
    <property type="nucleotide sequence ID" value="NC_001263.1"/>
</dbReference>
<dbReference type="SMR" id="Q9RX89"/>
<dbReference type="FunCoup" id="Q9RX89">
    <property type="interactions" value="334"/>
</dbReference>
<dbReference type="STRING" id="243230.DR_0426"/>
<dbReference type="MEROPS" id="C26.965"/>
<dbReference type="PaxDb" id="243230-DR_0426"/>
<dbReference type="EnsemblBacteria" id="AAF10003">
    <property type="protein sequence ID" value="AAF10003"/>
    <property type="gene ID" value="DR_0426"/>
</dbReference>
<dbReference type="GeneID" id="69516658"/>
<dbReference type="KEGG" id="dra:DR_0426"/>
<dbReference type="PATRIC" id="fig|243230.17.peg.600"/>
<dbReference type="eggNOG" id="COG0118">
    <property type="taxonomic scope" value="Bacteria"/>
</dbReference>
<dbReference type="HOGENOM" id="CLU_071837_2_2_0"/>
<dbReference type="InParanoid" id="Q9RX89"/>
<dbReference type="OrthoDB" id="9807137at2"/>
<dbReference type="UniPathway" id="UPA00031">
    <property type="reaction ID" value="UER00010"/>
</dbReference>
<dbReference type="Proteomes" id="UP000002524">
    <property type="component" value="Chromosome 1"/>
</dbReference>
<dbReference type="GO" id="GO:0005737">
    <property type="term" value="C:cytoplasm"/>
    <property type="evidence" value="ECO:0007669"/>
    <property type="project" value="UniProtKB-SubCell"/>
</dbReference>
<dbReference type="GO" id="GO:0004359">
    <property type="term" value="F:glutaminase activity"/>
    <property type="evidence" value="ECO:0007669"/>
    <property type="project" value="UniProtKB-EC"/>
</dbReference>
<dbReference type="GO" id="GO:0000107">
    <property type="term" value="F:imidazoleglycerol-phosphate synthase activity"/>
    <property type="evidence" value="ECO:0000318"/>
    <property type="project" value="GO_Central"/>
</dbReference>
<dbReference type="GO" id="GO:0016829">
    <property type="term" value="F:lyase activity"/>
    <property type="evidence" value="ECO:0007669"/>
    <property type="project" value="UniProtKB-KW"/>
</dbReference>
<dbReference type="GO" id="GO:0000105">
    <property type="term" value="P:L-histidine biosynthetic process"/>
    <property type="evidence" value="ECO:0007669"/>
    <property type="project" value="UniProtKB-UniRule"/>
</dbReference>
<dbReference type="CDD" id="cd01748">
    <property type="entry name" value="GATase1_IGP_Synthase"/>
    <property type="match status" value="1"/>
</dbReference>
<dbReference type="Gene3D" id="3.40.50.880">
    <property type="match status" value="1"/>
</dbReference>
<dbReference type="HAMAP" id="MF_00278">
    <property type="entry name" value="HisH"/>
    <property type="match status" value="1"/>
</dbReference>
<dbReference type="InterPro" id="IPR029062">
    <property type="entry name" value="Class_I_gatase-like"/>
</dbReference>
<dbReference type="InterPro" id="IPR017926">
    <property type="entry name" value="GATASE"/>
</dbReference>
<dbReference type="InterPro" id="IPR010139">
    <property type="entry name" value="Imidazole-glycPsynth_HisH"/>
</dbReference>
<dbReference type="NCBIfam" id="TIGR01855">
    <property type="entry name" value="IMP_synth_hisH"/>
    <property type="match status" value="1"/>
</dbReference>
<dbReference type="PANTHER" id="PTHR42701">
    <property type="entry name" value="IMIDAZOLE GLYCEROL PHOSPHATE SYNTHASE SUBUNIT HISH"/>
    <property type="match status" value="1"/>
</dbReference>
<dbReference type="PANTHER" id="PTHR42701:SF1">
    <property type="entry name" value="IMIDAZOLE GLYCEROL PHOSPHATE SYNTHASE SUBUNIT HISH"/>
    <property type="match status" value="1"/>
</dbReference>
<dbReference type="Pfam" id="PF00117">
    <property type="entry name" value="GATase"/>
    <property type="match status" value="1"/>
</dbReference>
<dbReference type="PIRSF" id="PIRSF000495">
    <property type="entry name" value="Amidotransf_hisH"/>
    <property type="match status" value="1"/>
</dbReference>
<dbReference type="SUPFAM" id="SSF52317">
    <property type="entry name" value="Class I glutamine amidotransferase-like"/>
    <property type="match status" value="1"/>
</dbReference>
<dbReference type="PROSITE" id="PS51273">
    <property type="entry name" value="GATASE_TYPE_1"/>
    <property type="match status" value="1"/>
</dbReference>